<sequence>MVVRTGTCSFCEYRIYPGRGQRFIAKDGRGFFFLTKKAKCLSLRKVKAQKITWTIARRRLWKKVKATDIAQKKKKRNVTVARAIVGISLEEINRRKNLDASHKKAEAEKAVRELKQKKANDIEKKRADRKLQGKDVKAAKKAETKKTKQPVGAKGGKK</sequence>
<protein>
    <recommendedName>
        <fullName evidence="2">Large ribosomal subunit protein eL24</fullName>
    </recommendedName>
    <alternativeName>
        <fullName>60S ribosomal protein L24</fullName>
    </alternativeName>
</protein>
<gene>
    <name type="primary">RPL24</name>
    <name type="ORF">TTHERM_00476640A</name>
</gene>
<name>RL24_TETTS</name>
<comment type="similarity">
    <text evidence="2">Belongs to the eukaryotic ribosomal protein eL24 family.</text>
</comment>
<evidence type="ECO:0000256" key="1">
    <source>
        <dbReference type="SAM" id="MobiDB-lite"/>
    </source>
</evidence>
<evidence type="ECO:0000305" key="2"/>
<reference key="1">
    <citation type="journal article" date="2006" name="PLoS Biol.">
        <title>Macronuclear genome sequence of the ciliate Tetrahymena thermophila, a model eukaryote.</title>
        <authorList>
            <person name="Eisen J.A."/>
            <person name="Coyne R.S."/>
            <person name="Wu M."/>
            <person name="Wu D."/>
            <person name="Thiagarajan M."/>
            <person name="Wortman J.R."/>
            <person name="Badger J.H."/>
            <person name="Ren Q."/>
            <person name="Amedeo P."/>
            <person name="Jones K.M."/>
            <person name="Tallon L.J."/>
            <person name="Delcher A.L."/>
            <person name="Salzberg S.L."/>
            <person name="Silva J.C."/>
            <person name="Haas B.J."/>
            <person name="Majoros W.H."/>
            <person name="Farzad M."/>
            <person name="Carlton J.M."/>
            <person name="Smith R.K. Jr."/>
            <person name="Garg J."/>
            <person name="Pearlman R.E."/>
            <person name="Karrer K.M."/>
            <person name="Sun L."/>
            <person name="Manning G."/>
            <person name="Elde N.C."/>
            <person name="Turkewitz A.P."/>
            <person name="Asai D.J."/>
            <person name="Wilkes D.E."/>
            <person name="Wang Y."/>
            <person name="Cai H."/>
            <person name="Collins K."/>
            <person name="Stewart B.A."/>
            <person name="Lee S.R."/>
            <person name="Wilamowska K."/>
            <person name="Weinberg Z."/>
            <person name="Ruzzo W.L."/>
            <person name="Wloga D."/>
            <person name="Gaertig J."/>
            <person name="Frankel J."/>
            <person name="Tsao C.-C."/>
            <person name="Gorovsky M.A."/>
            <person name="Keeling P.J."/>
            <person name="Waller R.F."/>
            <person name="Patron N.J."/>
            <person name="Cherry J.M."/>
            <person name="Stover N.A."/>
            <person name="Krieger C.J."/>
            <person name="del Toro C."/>
            <person name="Ryder H.F."/>
            <person name="Williamson S.C."/>
            <person name="Barbeau R.A."/>
            <person name="Hamilton E.P."/>
            <person name="Orias E."/>
        </authorList>
    </citation>
    <scope>NUCLEOTIDE SEQUENCE [LARGE SCALE GENOMIC DNA]</scope>
    <source>
        <strain>SB210</strain>
    </source>
</reference>
<reference key="2">
    <citation type="journal article" date="2011" name="Science">
        <title>Crystal structure of the eukaryotic 60S ribosomal subunit in complex with initiation factor 6.</title>
        <authorList>
            <person name="Klinge S."/>
            <person name="Voigts-Hoffmann F."/>
            <person name="Leibundgut M."/>
            <person name="Arpagaus S."/>
            <person name="Ban N."/>
        </authorList>
    </citation>
    <scope>X-RAY CRYSTALLOGRAPHY (3.52 ANGSTROMS) OF 60S RIBOSOME</scope>
</reference>
<proteinExistence type="evidence at protein level"/>
<organism>
    <name type="scientific">Tetrahymena thermophila (strain SB210)</name>
    <dbReference type="NCBI Taxonomy" id="312017"/>
    <lineage>
        <taxon>Eukaryota</taxon>
        <taxon>Sar</taxon>
        <taxon>Alveolata</taxon>
        <taxon>Ciliophora</taxon>
        <taxon>Intramacronucleata</taxon>
        <taxon>Oligohymenophorea</taxon>
        <taxon>Hymenostomatida</taxon>
        <taxon>Tetrahymenina</taxon>
        <taxon>Tetrahymenidae</taxon>
        <taxon>Tetrahymena</taxon>
    </lineage>
</organism>
<feature type="chain" id="PRO_0000413508" description="Large ribosomal subunit protein eL24">
    <location>
        <begin position="1"/>
        <end position="158"/>
    </location>
</feature>
<feature type="region of interest" description="Disordered" evidence="1">
    <location>
        <begin position="98"/>
        <end position="158"/>
    </location>
</feature>
<feature type="compositionally biased region" description="Basic and acidic residues" evidence="1">
    <location>
        <begin position="98"/>
        <end position="146"/>
    </location>
</feature>
<keyword id="KW-0002">3D-structure</keyword>
<keyword id="KW-1185">Reference proteome</keyword>
<keyword id="KW-0687">Ribonucleoprotein</keyword>
<keyword id="KW-0689">Ribosomal protein</keyword>
<accession>P0DJ54</accession>
<dbReference type="EMBL" id="GG662667">
    <property type="protein sequence ID" value="EAR97127.1"/>
    <property type="molecule type" value="Genomic_DNA"/>
</dbReference>
<dbReference type="RefSeq" id="XP_001017372.1">
    <property type="nucleotide sequence ID" value="XM_001017372.3"/>
</dbReference>
<dbReference type="PDB" id="4V8P">
    <property type="method" value="X-ray"/>
    <property type="resolution" value="3.52 A"/>
    <property type="chains" value="BT/CT/ET/GT=1-158"/>
</dbReference>
<dbReference type="PDBsum" id="4V8P"/>
<dbReference type="SMR" id="P0DJ54"/>
<dbReference type="FunCoup" id="P0DJ54">
    <property type="interactions" value="446"/>
</dbReference>
<dbReference type="IntAct" id="P0DJ54">
    <property type="interactions" value="1"/>
</dbReference>
<dbReference type="STRING" id="312017.P0DJ54"/>
<dbReference type="EnsemblProtists" id="EAR97127">
    <property type="protein sequence ID" value="EAR97127"/>
    <property type="gene ID" value="TTHERM_00476640"/>
</dbReference>
<dbReference type="KEGG" id="tet:TTHERM_00476640"/>
<dbReference type="eggNOG" id="KOG1722">
    <property type="taxonomic scope" value="Eukaryota"/>
</dbReference>
<dbReference type="HOGENOM" id="CLU_106411_3_0_1"/>
<dbReference type="InParanoid" id="P0DJ54"/>
<dbReference type="OMA" id="SANCAEW"/>
<dbReference type="OrthoDB" id="308293at2759"/>
<dbReference type="Proteomes" id="UP000009168">
    <property type="component" value="Unassembled WGS sequence"/>
</dbReference>
<dbReference type="GO" id="GO:0022625">
    <property type="term" value="C:cytosolic large ribosomal subunit"/>
    <property type="evidence" value="ECO:0007669"/>
    <property type="project" value="TreeGrafter"/>
</dbReference>
<dbReference type="GO" id="GO:0003729">
    <property type="term" value="F:mRNA binding"/>
    <property type="evidence" value="ECO:0007669"/>
    <property type="project" value="TreeGrafter"/>
</dbReference>
<dbReference type="GO" id="GO:0003735">
    <property type="term" value="F:structural constituent of ribosome"/>
    <property type="evidence" value="ECO:0007669"/>
    <property type="project" value="InterPro"/>
</dbReference>
<dbReference type="GO" id="GO:0002181">
    <property type="term" value="P:cytoplasmic translation"/>
    <property type="evidence" value="ECO:0007669"/>
    <property type="project" value="TreeGrafter"/>
</dbReference>
<dbReference type="CDD" id="cd00472">
    <property type="entry name" value="Ribosomal_L24e_L24"/>
    <property type="match status" value="1"/>
</dbReference>
<dbReference type="Gene3D" id="6.10.250.1270">
    <property type="match status" value="1"/>
</dbReference>
<dbReference type="Gene3D" id="2.30.170.20">
    <property type="entry name" value="Ribosomal protein L24e"/>
    <property type="match status" value="1"/>
</dbReference>
<dbReference type="InterPro" id="IPR038630">
    <property type="entry name" value="L24e/L24_sf"/>
</dbReference>
<dbReference type="InterPro" id="IPR056366">
    <property type="entry name" value="Ribosomal_eL24"/>
</dbReference>
<dbReference type="InterPro" id="IPR000988">
    <property type="entry name" value="Ribosomal_eL24-rel_N"/>
</dbReference>
<dbReference type="PANTHER" id="PTHR10792">
    <property type="entry name" value="60S RIBOSOMAL PROTEIN L24"/>
    <property type="match status" value="1"/>
</dbReference>
<dbReference type="PANTHER" id="PTHR10792:SF1">
    <property type="entry name" value="RIBOSOMAL PROTEIN L24"/>
    <property type="match status" value="1"/>
</dbReference>
<dbReference type="Pfam" id="PF01246">
    <property type="entry name" value="Ribosomal_L24e"/>
    <property type="match status" value="1"/>
</dbReference>
<dbReference type="SUPFAM" id="SSF57716">
    <property type="entry name" value="Glucocorticoid receptor-like (DNA-binding domain)"/>
    <property type="match status" value="1"/>
</dbReference>